<name>CWC24_YARLI</name>
<keyword id="KW-0238">DNA-binding</keyword>
<keyword id="KW-0479">Metal-binding</keyword>
<keyword id="KW-0507">mRNA processing</keyword>
<keyword id="KW-0508">mRNA splicing</keyword>
<keyword id="KW-0539">Nucleus</keyword>
<keyword id="KW-1185">Reference proteome</keyword>
<keyword id="KW-0747">Spliceosome</keyword>
<keyword id="KW-0862">Zinc</keyword>
<keyword id="KW-0863">Zinc-finger</keyword>
<evidence type="ECO:0000250" key="1"/>
<evidence type="ECO:0000255" key="2">
    <source>
        <dbReference type="PROSITE-ProRule" id="PRU00175"/>
    </source>
</evidence>
<evidence type="ECO:0000255" key="3">
    <source>
        <dbReference type="PROSITE-ProRule" id="PRU00723"/>
    </source>
</evidence>
<evidence type="ECO:0000256" key="4">
    <source>
        <dbReference type="SAM" id="MobiDB-lite"/>
    </source>
</evidence>
<evidence type="ECO:0000305" key="5"/>
<accession>Q6CB23</accession>
<feature type="chain" id="PRO_0000055894" description="Pre-mRNA-splicing factor CWC24">
    <location>
        <begin position="1"/>
        <end position="256"/>
    </location>
</feature>
<feature type="zinc finger region" description="C3H1-type" evidence="3">
    <location>
        <begin position="131"/>
        <end position="159"/>
    </location>
</feature>
<feature type="zinc finger region" description="RING-type" evidence="2">
    <location>
        <begin position="206"/>
        <end position="244"/>
    </location>
</feature>
<feature type="region of interest" description="Disordered" evidence="4">
    <location>
        <begin position="1"/>
        <end position="80"/>
    </location>
</feature>
<feature type="region of interest" description="Disordered" evidence="4">
    <location>
        <begin position="173"/>
        <end position="200"/>
    </location>
</feature>
<feature type="compositionally biased region" description="Low complexity" evidence="4">
    <location>
        <begin position="18"/>
        <end position="34"/>
    </location>
</feature>
<feature type="compositionally biased region" description="Polar residues" evidence="4">
    <location>
        <begin position="45"/>
        <end position="66"/>
    </location>
</feature>
<feature type="compositionally biased region" description="Basic and acidic residues" evidence="4">
    <location>
        <begin position="67"/>
        <end position="80"/>
    </location>
</feature>
<feature type="compositionally biased region" description="Basic and acidic residues" evidence="4">
    <location>
        <begin position="173"/>
        <end position="182"/>
    </location>
</feature>
<protein>
    <recommendedName>
        <fullName>Pre-mRNA-splicing factor CWC24</fullName>
    </recommendedName>
</protein>
<gene>
    <name type="primary">CWC24</name>
    <name type="ordered locus">YALI0C22484g</name>
</gene>
<reference key="1">
    <citation type="journal article" date="2004" name="Nature">
        <title>Genome evolution in yeasts.</title>
        <authorList>
            <person name="Dujon B."/>
            <person name="Sherman D."/>
            <person name="Fischer G."/>
            <person name="Durrens P."/>
            <person name="Casaregola S."/>
            <person name="Lafontaine I."/>
            <person name="de Montigny J."/>
            <person name="Marck C."/>
            <person name="Neuveglise C."/>
            <person name="Talla E."/>
            <person name="Goffard N."/>
            <person name="Frangeul L."/>
            <person name="Aigle M."/>
            <person name="Anthouard V."/>
            <person name="Babour A."/>
            <person name="Barbe V."/>
            <person name="Barnay S."/>
            <person name="Blanchin S."/>
            <person name="Beckerich J.-M."/>
            <person name="Beyne E."/>
            <person name="Bleykasten C."/>
            <person name="Boisrame A."/>
            <person name="Boyer J."/>
            <person name="Cattolico L."/>
            <person name="Confanioleri F."/>
            <person name="de Daruvar A."/>
            <person name="Despons L."/>
            <person name="Fabre E."/>
            <person name="Fairhead C."/>
            <person name="Ferry-Dumazet H."/>
            <person name="Groppi A."/>
            <person name="Hantraye F."/>
            <person name="Hennequin C."/>
            <person name="Jauniaux N."/>
            <person name="Joyet P."/>
            <person name="Kachouri R."/>
            <person name="Kerrest A."/>
            <person name="Koszul R."/>
            <person name="Lemaire M."/>
            <person name="Lesur I."/>
            <person name="Ma L."/>
            <person name="Muller H."/>
            <person name="Nicaud J.-M."/>
            <person name="Nikolski M."/>
            <person name="Oztas S."/>
            <person name="Ozier-Kalogeropoulos O."/>
            <person name="Pellenz S."/>
            <person name="Potier S."/>
            <person name="Richard G.-F."/>
            <person name="Straub M.-L."/>
            <person name="Suleau A."/>
            <person name="Swennen D."/>
            <person name="Tekaia F."/>
            <person name="Wesolowski-Louvel M."/>
            <person name="Westhof E."/>
            <person name="Wirth B."/>
            <person name="Zeniou-Meyer M."/>
            <person name="Zivanovic Y."/>
            <person name="Bolotin-Fukuhara M."/>
            <person name="Thierry A."/>
            <person name="Bouchier C."/>
            <person name="Caudron B."/>
            <person name="Scarpelli C."/>
            <person name="Gaillardin C."/>
            <person name="Weissenbach J."/>
            <person name="Wincker P."/>
            <person name="Souciet J.-L."/>
        </authorList>
    </citation>
    <scope>NUCLEOTIDE SEQUENCE [LARGE SCALE GENOMIC DNA]</scope>
    <source>
        <strain>CLIB 122 / E 150</strain>
    </source>
</reference>
<sequence length="256" mass="28500">MFKRKKNAGQKRTTIIDSDSSSEGSGDESALSSAFKRRKNDTQKRTTPTSVATSTKVRAPSFSSTIDHSHSRNLSKTDEATKETILYAKDDSDDSQKLSKGPYKVPFSKPTTTTTVGLKASSNIKSTTSQDYQPDVCKDYKLTGFCGYGDSCKFLHMREDYKAGWQIEREWEIKNREDDPPRDAGGVSRDADTATSRADSGIPDTCPICQGEFKSPVVTQCCHYFCEKCFLAKHKKKQNCFVCGKNTNGVCKPFKR</sequence>
<comment type="function">
    <text evidence="1">Involved in pre-mRNA splicing.</text>
</comment>
<comment type="subunit">
    <text evidence="1">Associated with the spliceosome.</text>
</comment>
<comment type="subcellular location">
    <subcellularLocation>
        <location evidence="1">Nucleus</location>
    </subcellularLocation>
</comment>
<comment type="similarity">
    <text evidence="5">Belongs to the CWC24 family.</text>
</comment>
<organism>
    <name type="scientific">Yarrowia lipolytica (strain CLIB 122 / E 150)</name>
    <name type="common">Yeast</name>
    <name type="synonym">Candida lipolytica</name>
    <dbReference type="NCBI Taxonomy" id="284591"/>
    <lineage>
        <taxon>Eukaryota</taxon>
        <taxon>Fungi</taxon>
        <taxon>Dikarya</taxon>
        <taxon>Ascomycota</taxon>
        <taxon>Saccharomycotina</taxon>
        <taxon>Dipodascomycetes</taxon>
        <taxon>Dipodascales</taxon>
        <taxon>Dipodascales incertae sedis</taxon>
        <taxon>Yarrowia</taxon>
    </lineage>
</organism>
<proteinExistence type="inferred from homology"/>
<dbReference type="EMBL" id="CR382129">
    <property type="protein sequence ID" value="CAG82459.1"/>
    <property type="molecule type" value="Genomic_DNA"/>
</dbReference>
<dbReference type="RefSeq" id="XP_502139.1">
    <property type="nucleotide sequence ID" value="XM_502139.1"/>
</dbReference>
<dbReference type="SMR" id="Q6CB23"/>
<dbReference type="FunCoup" id="Q6CB23">
    <property type="interactions" value="304"/>
</dbReference>
<dbReference type="STRING" id="284591.Q6CB23"/>
<dbReference type="EnsemblFungi" id="CAG82459">
    <property type="protein sequence ID" value="CAG82459"/>
    <property type="gene ID" value="YALI0_C22484g"/>
</dbReference>
<dbReference type="KEGG" id="yli:2909660"/>
<dbReference type="VEuPathDB" id="FungiDB:YALI0_C22484g"/>
<dbReference type="HOGENOM" id="CLU_050460_3_0_1"/>
<dbReference type="InParanoid" id="Q6CB23"/>
<dbReference type="OMA" id="PPENMAY"/>
<dbReference type="OrthoDB" id="126925at4891"/>
<dbReference type="Proteomes" id="UP000001300">
    <property type="component" value="Chromosome C"/>
</dbReference>
<dbReference type="GO" id="GO:0005684">
    <property type="term" value="C:U2-type spliceosomal complex"/>
    <property type="evidence" value="ECO:0000318"/>
    <property type="project" value="GO_Central"/>
</dbReference>
<dbReference type="GO" id="GO:0003677">
    <property type="term" value="F:DNA binding"/>
    <property type="evidence" value="ECO:0007669"/>
    <property type="project" value="UniProtKB-KW"/>
</dbReference>
<dbReference type="GO" id="GO:0008270">
    <property type="term" value="F:zinc ion binding"/>
    <property type="evidence" value="ECO:0007669"/>
    <property type="project" value="UniProtKB-KW"/>
</dbReference>
<dbReference type="GO" id="GO:0006397">
    <property type="term" value="P:mRNA processing"/>
    <property type="evidence" value="ECO:0007669"/>
    <property type="project" value="UniProtKB-KW"/>
</dbReference>
<dbReference type="GO" id="GO:0034247">
    <property type="term" value="P:snoRNA splicing"/>
    <property type="evidence" value="ECO:0000318"/>
    <property type="project" value="GO_Central"/>
</dbReference>
<dbReference type="CDD" id="cd16539">
    <property type="entry name" value="RING-HC_RNF113A_B"/>
    <property type="match status" value="1"/>
</dbReference>
<dbReference type="Gene3D" id="4.10.1000.10">
    <property type="entry name" value="Zinc finger, CCCH-type"/>
    <property type="match status" value="1"/>
</dbReference>
<dbReference type="Gene3D" id="3.30.40.10">
    <property type="entry name" value="Zinc/RING finger domain, C3HC4 (zinc finger)"/>
    <property type="match status" value="1"/>
</dbReference>
<dbReference type="InterPro" id="IPR039971">
    <property type="entry name" value="CWC24-like"/>
</dbReference>
<dbReference type="InterPro" id="IPR000571">
    <property type="entry name" value="Znf_CCCH"/>
</dbReference>
<dbReference type="InterPro" id="IPR036855">
    <property type="entry name" value="Znf_CCCH_sf"/>
</dbReference>
<dbReference type="InterPro" id="IPR001841">
    <property type="entry name" value="Znf_RING"/>
</dbReference>
<dbReference type="InterPro" id="IPR013083">
    <property type="entry name" value="Znf_RING/FYVE/PHD"/>
</dbReference>
<dbReference type="PANTHER" id="PTHR12930:SF0">
    <property type="entry name" value="RING FINGER PROTEIN 113B"/>
    <property type="match status" value="1"/>
</dbReference>
<dbReference type="PANTHER" id="PTHR12930">
    <property type="entry name" value="ZINC FINGER PROTEIN 183"/>
    <property type="match status" value="1"/>
</dbReference>
<dbReference type="Pfam" id="PF13923">
    <property type="entry name" value="zf-C3HC4_2"/>
    <property type="match status" value="1"/>
</dbReference>
<dbReference type="Pfam" id="PF00642">
    <property type="entry name" value="zf-CCCH"/>
    <property type="match status" value="1"/>
</dbReference>
<dbReference type="SMART" id="SM00184">
    <property type="entry name" value="RING"/>
    <property type="match status" value="1"/>
</dbReference>
<dbReference type="SMART" id="SM00356">
    <property type="entry name" value="ZnF_C3H1"/>
    <property type="match status" value="1"/>
</dbReference>
<dbReference type="SUPFAM" id="SSF90229">
    <property type="entry name" value="CCCH zinc finger"/>
    <property type="match status" value="1"/>
</dbReference>
<dbReference type="SUPFAM" id="SSF57850">
    <property type="entry name" value="RING/U-box"/>
    <property type="match status" value="1"/>
</dbReference>
<dbReference type="PROSITE" id="PS50103">
    <property type="entry name" value="ZF_C3H1"/>
    <property type="match status" value="1"/>
</dbReference>
<dbReference type="PROSITE" id="PS50089">
    <property type="entry name" value="ZF_RING_2"/>
    <property type="match status" value="1"/>
</dbReference>